<evidence type="ECO:0000255" key="1">
    <source>
        <dbReference type="HAMAP-Rule" id="MF_00504"/>
    </source>
</evidence>
<dbReference type="EC" id="3.4.11.23" evidence="1"/>
<dbReference type="EMBL" id="CP000653">
    <property type="protein sequence ID" value="ABP61684.1"/>
    <property type="molecule type" value="Genomic_DNA"/>
</dbReference>
<dbReference type="RefSeq" id="WP_015960016.1">
    <property type="nucleotide sequence ID" value="NC_009436.1"/>
</dbReference>
<dbReference type="SMR" id="A4WDA4"/>
<dbReference type="STRING" id="399742.Ent638_3020"/>
<dbReference type="MEROPS" id="M17.004"/>
<dbReference type="KEGG" id="ent:Ent638_3020"/>
<dbReference type="eggNOG" id="COG0260">
    <property type="taxonomic scope" value="Bacteria"/>
</dbReference>
<dbReference type="HOGENOM" id="CLU_013734_7_1_6"/>
<dbReference type="OrthoDB" id="9809354at2"/>
<dbReference type="Proteomes" id="UP000000230">
    <property type="component" value="Chromosome"/>
</dbReference>
<dbReference type="GO" id="GO:0005737">
    <property type="term" value="C:cytoplasm"/>
    <property type="evidence" value="ECO:0007669"/>
    <property type="project" value="UniProtKB-SubCell"/>
</dbReference>
<dbReference type="GO" id="GO:0030145">
    <property type="term" value="F:manganese ion binding"/>
    <property type="evidence" value="ECO:0007669"/>
    <property type="project" value="UniProtKB-UniRule"/>
</dbReference>
<dbReference type="GO" id="GO:0070006">
    <property type="term" value="F:metalloaminopeptidase activity"/>
    <property type="evidence" value="ECO:0007669"/>
    <property type="project" value="InterPro"/>
</dbReference>
<dbReference type="GO" id="GO:0006508">
    <property type="term" value="P:proteolysis"/>
    <property type="evidence" value="ECO:0007669"/>
    <property type="project" value="UniProtKB-UniRule"/>
</dbReference>
<dbReference type="CDD" id="cd00433">
    <property type="entry name" value="Peptidase_M17"/>
    <property type="match status" value="1"/>
</dbReference>
<dbReference type="FunFam" id="3.40.630.10:FF:000037">
    <property type="entry name" value="Peptidase B"/>
    <property type="match status" value="1"/>
</dbReference>
<dbReference type="Gene3D" id="3.40.630.10">
    <property type="entry name" value="Zn peptidases"/>
    <property type="match status" value="1"/>
</dbReference>
<dbReference type="HAMAP" id="MF_00504">
    <property type="entry name" value="Aminopeptidase_M17"/>
    <property type="match status" value="1"/>
</dbReference>
<dbReference type="InterPro" id="IPR011356">
    <property type="entry name" value="Leucine_aapep/pepB"/>
</dbReference>
<dbReference type="InterPro" id="IPR047620">
    <property type="entry name" value="M17_PepB-like_N"/>
</dbReference>
<dbReference type="InterPro" id="IPR008330">
    <property type="entry name" value="Pept_M17_PepB"/>
</dbReference>
<dbReference type="InterPro" id="IPR000819">
    <property type="entry name" value="Peptidase_M17_C"/>
</dbReference>
<dbReference type="NCBIfam" id="NF003450">
    <property type="entry name" value="PRK05015.1"/>
    <property type="match status" value="1"/>
</dbReference>
<dbReference type="PANTHER" id="PTHR11963">
    <property type="entry name" value="LEUCINE AMINOPEPTIDASE-RELATED"/>
    <property type="match status" value="1"/>
</dbReference>
<dbReference type="PANTHER" id="PTHR11963:SF20">
    <property type="entry name" value="PEPTIDASE B"/>
    <property type="match status" value="1"/>
</dbReference>
<dbReference type="Pfam" id="PF12404">
    <property type="entry name" value="DUF3663"/>
    <property type="match status" value="1"/>
</dbReference>
<dbReference type="Pfam" id="PF00883">
    <property type="entry name" value="Peptidase_M17"/>
    <property type="match status" value="1"/>
</dbReference>
<dbReference type="PIRSF" id="PIRSF036388">
    <property type="entry name" value="Ctsl_amnpptdse_B"/>
    <property type="match status" value="1"/>
</dbReference>
<dbReference type="PRINTS" id="PR00481">
    <property type="entry name" value="LAMNOPPTDASE"/>
</dbReference>
<dbReference type="SUPFAM" id="SSF53187">
    <property type="entry name" value="Zn-dependent exopeptidases"/>
    <property type="match status" value="1"/>
</dbReference>
<dbReference type="PROSITE" id="PS00631">
    <property type="entry name" value="CYTOSOL_AP"/>
    <property type="match status" value="1"/>
</dbReference>
<proteinExistence type="inferred from homology"/>
<sequence>MTEAMNITLSTQPADARWGEKATYSINNDGITLHLNGSDDLGLIQRAARKIDGLGIKHVTLAGEGWDTDRSWAFWAGYKGPKGTRKIEWANLDEAGQKELESRLMIIDWVRDTINAPAEELGPEQLAQRAVDLLCKAAGDKMSYRITKGEDLREQNYMGLHTVGRGSERPPVLLALDYNPTGDKQAPVYACLVGKGITFDTGGYSLKQSAFMDSMKSDMGGAATITGALAFAITRGLNKRVKLYLCCADNMVSGNAFKLGDIIRYRNGKNVEVMNTDAEGRLVLADGLIDASAQKPELIIDMATLTGAAKTALGNDYHALFTFDDKLASRLMASAAAENEPFWRLPLAEFHRSQLPSNFAELNNTASAAYPAGASTAAGFLSHFVENYHEGWLHIDCSATYRKAGVEQWSAGATGLGVRTIANLLTAE</sequence>
<feature type="chain" id="PRO_1000060517" description="Peptidase B">
    <location>
        <begin position="1"/>
        <end position="428"/>
    </location>
</feature>
<feature type="active site" evidence="1">
    <location>
        <position position="207"/>
    </location>
</feature>
<feature type="active site" evidence="1">
    <location>
        <position position="281"/>
    </location>
</feature>
<feature type="binding site" evidence="1">
    <location>
        <position position="195"/>
    </location>
    <ligand>
        <name>Mn(2+)</name>
        <dbReference type="ChEBI" id="CHEBI:29035"/>
        <label>2</label>
    </ligand>
</feature>
<feature type="binding site" evidence="1">
    <location>
        <position position="200"/>
    </location>
    <ligand>
        <name>Mn(2+)</name>
        <dbReference type="ChEBI" id="CHEBI:29035"/>
        <label>1</label>
    </ligand>
</feature>
<feature type="binding site" evidence="1">
    <location>
        <position position="200"/>
    </location>
    <ligand>
        <name>Mn(2+)</name>
        <dbReference type="ChEBI" id="CHEBI:29035"/>
        <label>2</label>
    </ligand>
</feature>
<feature type="binding site" evidence="1">
    <location>
        <position position="218"/>
    </location>
    <ligand>
        <name>Mn(2+)</name>
        <dbReference type="ChEBI" id="CHEBI:29035"/>
        <label>2</label>
    </ligand>
</feature>
<feature type="binding site" evidence="1">
    <location>
        <position position="277"/>
    </location>
    <ligand>
        <name>Mn(2+)</name>
        <dbReference type="ChEBI" id="CHEBI:29035"/>
        <label>1</label>
    </ligand>
</feature>
<feature type="binding site" evidence="1">
    <location>
        <position position="279"/>
    </location>
    <ligand>
        <name>Mn(2+)</name>
        <dbReference type="ChEBI" id="CHEBI:29035"/>
        <label>1</label>
    </ligand>
</feature>
<feature type="binding site" evidence="1">
    <location>
        <position position="279"/>
    </location>
    <ligand>
        <name>Mn(2+)</name>
        <dbReference type="ChEBI" id="CHEBI:29035"/>
        <label>2</label>
    </ligand>
</feature>
<keyword id="KW-0031">Aminopeptidase</keyword>
<keyword id="KW-0963">Cytoplasm</keyword>
<keyword id="KW-0378">Hydrolase</keyword>
<keyword id="KW-0464">Manganese</keyword>
<keyword id="KW-0479">Metal-binding</keyword>
<keyword id="KW-0645">Protease</keyword>
<reference key="1">
    <citation type="journal article" date="2010" name="PLoS Genet.">
        <title>Genome sequence of the plant growth promoting endophytic bacterium Enterobacter sp. 638.</title>
        <authorList>
            <person name="Taghavi S."/>
            <person name="van der Lelie D."/>
            <person name="Hoffman A."/>
            <person name="Zhang Y.B."/>
            <person name="Walla M.D."/>
            <person name="Vangronsveld J."/>
            <person name="Newman L."/>
            <person name="Monchy S."/>
        </authorList>
    </citation>
    <scope>NUCLEOTIDE SEQUENCE [LARGE SCALE GENOMIC DNA]</scope>
    <source>
        <strain>638</strain>
    </source>
</reference>
<comment type="function">
    <text evidence="1">Probably plays an important role in intracellular peptide degradation.</text>
</comment>
<comment type="catalytic activity">
    <reaction evidence="1">
        <text>Release of an N-terminal amino acid, Xaa, from a peptide or arylamide. Xaa is preferably Glu or Asp but may be other amino acids, including Leu, Met, His, Cys and Gln.</text>
        <dbReference type="EC" id="3.4.11.23"/>
    </reaction>
</comment>
<comment type="cofactor">
    <cofactor evidence="1">
        <name>Mn(2+)</name>
        <dbReference type="ChEBI" id="CHEBI:29035"/>
    </cofactor>
    <text evidence="1">Binds 2 manganese ions per subunit.</text>
</comment>
<comment type="subunit">
    <text evidence="1">Homohexamer.</text>
</comment>
<comment type="subcellular location">
    <subcellularLocation>
        <location evidence="1">Cytoplasm</location>
    </subcellularLocation>
</comment>
<comment type="similarity">
    <text evidence="1">Belongs to the peptidase M17 family.</text>
</comment>
<name>PEPB_ENT38</name>
<organism>
    <name type="scientific">Enterobacter sp. (strain 638)</name>
    <dbReference type="NCBI Taxonomy" id="399742"/>
    <lineage>
        <taxon>Bacteria</taxon>
        <taxon>Pseudomonadati</taxon>
        <taxon>Pseudomonadota</taxon>
        <taxon>Gammaproteobacteria</taxon>
        <taxon>Enterobacterales</taxon>
        <taxon>Enterobacteriaceae</taxon>
        <taxon>Enterobacter</taxon>
    </lineage>
</organism>
<accession>A4WDA4</accession>
<gene>
    <name evidence="1" type="primary">pepB</name>
    <name type="ordered locus">Ent638_3020</name>
</gene>
<protein>
    <recommendedName>
        <fullName evidence="1">Peptidase B</fullName>
        <ecNumber evidence="1">3.4.11.23</ecNumber>
    </recommendedName>
    <alternativeName>
        <fullName evidence="1">Aminopeptidase B</fullName>
    </alternativeName>
</protein>